<reference key="1">
    <citation type="submission" date="2003-01" db="EMBL/GenBank/DDBJ databases">
        <title>Cloning and analysis of TCTP-like protein from Japanese sea perch, Lateolabrax japonicus.</title>
        <authorList>
            <person name="Song L."/>
            <person name="Qiu L."/>
            <person name="Cai Z."/>
            <person name="Wu L."/>
        </authorList>
    </citation>
    <scope>NUCLEOTIDE SEQUENCE [MRNA]</scope>
</reference>
<protein>
    <recommendedName>
        <fullName>Translationally-controlled tumor protein homolog</fullName>
        <shortName>TCTP</shortName>
    </recommendedName>
</protein>
<evidence type="ECO:0000250" key="1"/>
<evidence type="ECO:0000255" key="2">
    <source>
        <dbReference type="PROSITE-ProRule" id="PRU01133"/>
    </source>
</evidence>
<keyword id="KW-0106">Calcium</keyword>
<keyword id="KW-0963">Cytoplasm</keyword>
<proteinExistence type="evidence at transcript level"/>
<organism>
    <name type="scientific">Lateolabrax japonicus</name>
    <name type="common">Japanese sea perch</name>
    <name type="synonym">Japanese sea bass</name>
    <dbReference type="NCBI Taxonomy" id="8164"/>
    <lineage>
        <taxon>Eukaryota</taxon>
        <taxon>Metazoa</taxon>
        <taxon>Chordata</taxon>
        <taxon>Craniata</taxon>
        <taxon>Vertebrata</taxon>
        <taxon>Euteleostomi</taxon>
        <taxon>Actinopterygii</taxon>
        <taxon>Neopterygii</taxon>
        <taxon>Teleostei</taxon>
        <taxon>Neoteleostei</taxon>
        <taxon>Acanthomorphata</taxon>
        <taxon>Eupercaria</taxon>
        <taxon>Acropomatiformes</taxon>
        <taxon>Lateolabracidae</taxon>
        <taxon>Lateolabrax</taxon>
    </lineage>
</organism>
<sequence>MIIYKCIISGDEMFSDAFKVKESANGIFYEVDGKITTRTDNIDDSLISANASAEETTDCTDSSVVSGVDIVLNHKLQETSFDKKSYKVYIKDYVKAIKQKLQEEKPERVDAFMADVAEEVKEILNNLKNYQFFTGENMNPEGMVGLLDYREDGTTPYMLFFKDGLLAEKC</sequence>
<comment type="function">
    <text evidence="1">Involved in calcium binding and microtubule stabilization.</text>
</comment>
<comment type="subcellular location">
    <subcellularLocation>
        <location evidence="1">Cytoplasm</location>
    </subcellularLocation>
</comment>
<comment type="similarity">
    <text evidence="2">Belongs to the TCTP family.</text>
</comment>
<dbReference type="EMBL" id="AY210896">
    <property type="protein sequence ID" value="AAP43627.1"/>
    <property type="molecule type" value="mRNA"/>
</dbReference>
<dbReference type="SMR" id="Q6XSH4"/>
<dbReference type="GO" id="GO:0005737">
    <property type="term" value="C:cytoplasm"/>
    <property type="evidence" value="ECO:0007669"/>
    <property type="project" value="UniProtKB-SubCell"/>
</dbReference>
<dbReference type="GO" id="GO:0005509">
    <property type="term" value="F:calcium ion binding"/>
    <property type="evidence" value="ECO:0007669"/>
    <property type="project" value="TreeGrafter"/>
</dbReference>
<dbReference type="FunFam" id="2.170.150.10:FF:000002">
    <property type="entry name" value="Translationally-controlled tumor protein homolog"/>
    <property type="match status" value="1"/>
</dbReference>
<dbReference type="Gene3D" id="2.170.150.10">
    <property type="entry name" value="Metal Binding Protein, Guanine Nucleotide Exchange Factor, Chain A"/>
    <property type="match status" value="1"/>
</dbReference>
<dbReference type="InterPro" id="IPR011057">
    <property type="entry name" value="Mss4-like_sf"/>
</dbReference>
<dbReference type="InterPro" id="IPR011323">
    <property type="entry name" value="Mss4/transl-control_tumour"/>
</dbReference>
<dbReference type="InterPro" id="IPR034737">
    <property type="entry name" value="TCTP"/>
</dbReference>
<dbReference type="InterPro" id="IPR018103">
    <property type="entry name" value="Translation_control_tumour_CS"/>
</dbReference>
<dbReference type="InterPro" id="IPR018105">
    <property type="entry name" value="Translational_control_tumour_p"/>
</dbReference>
<dbReference type="PANTHER" id="PTHR11991">
    <property type="entry name" value="TRANSLATIONALLY CONTROLLED TUMOR PROTEIN-RELATED"/>
    <property type="match status" value="1"/>
</dbReference>
<dbReference type="PANTHER" id="PTHR11991:SF0">
    <property type="entry name" value="TRANSLATIONALLY-CONTROLLED TUMOR PROTEIN"/>
    <property type="match status" value="1"/>
</dbReference>
<dbReference type="Pfam" id="PF00838">
    <property type="entry name" value="TCTP"/>
    <property type="match status" value="1"/>
</dbReference>
<dbReference type="PRINTS" id="PR01653">
    <property type="entry name" value="TCTPROTEIN"/>
</dbReference>
<dbReference type="SUPFAM" id="SSF51316">
    <property type="entry name" value="Mss4-like"/>
    <property type="match status" value="1"/>
</dbReference>
<dbReference type="PROSITE" id="PS01003">
    <property type="entry name" value="TCTP_2"/>
    <property type="match status" value="1"/>
</dbReference>
<dbReference type="PROSITE" id="PS51797">
    <property type="entry name" value="TCTP_3"/>
    <property type="match status" value="1"/>
</dbReference>
<name>TCTP_LATJA</name>
<feature type="chain" id="PRO_0000211276" description="Translationally-controlled tumor protein homolog">
    <location>
        <begin position="1"/>
        <end position="170"/>
    </location>
</feature>
<feature type="domain" description="TCTP" evidence="2">
    <location>
        <begin position="1"/>
        <end position="170"/>
    </location>
</feature>
<gene>
    <name type="primary">tpt1</name>
    <name type="synonym">tctp</name>
</gene>
<accession>Q6XSH4</accession>